<accession>A0L5L8</accession>
<comment type="function">
    <text evidence="1">Required for the formation of a threonylcarbamoyl group on adenosine at position 37 (t(6)A37) in tRNAs that read codons beginning with adenine. Is involved in the transfer of the threonylcarbamoyl moiety of threonylcarbamoyl-AMP (TC-AMP) to the N6 group of A37, together with TsaE and TsaB. TsaD likely plays a direct catalytic role in this reaction.</text>
</comment>
<comment type="catalytic activity">
    <reaction evidence="1">
        <text>L-threonylcarbamoyladenylate + adenosine(37) in tRNA = N(6)-L-threonylcarbamoyladenosine(37) in tRNA + AMP + H(+)</text>
        <dbReference type="Rhea" id="RHEA:37059"/>
        <dbReference type="Rhea" id="RHEA-COMP:10162"/>
        <dbReference type="Rhea" id="RHEA-COMP:10163"/>
        <dbReference type="ChEBI" id="CHEBI:15378"/>
        <dbReference type="ChEBI" id="CHEBI:73682"/>
        <dbReference type="ChEBI" id="CHEBI:74411"/>
        <dbReference type="ChEBI" id="CHEBI:74418"/>
        <dbReference type="ChEBI" id="CHEBI:456215"/>
        <dbReference type="EC" id="2.3.1.234"/>
    </reaction>
</comment>
<comment type="cofactor">
    <cofactor evidence="1">
        <name>Fe(2+)</name>
        <dbReference type="ChEBI" id="CHEBI:29033"/>
    </cofactor>
    <text evidence="1">Binds 1 Fe(2+) ion per subunit.</text>
</comment>
<comment type="subcellular location">
    <subcellularLocation>
        <location evidence="1">Cytoplasm</location>
    </subcellularLocation>
</comment>
<comment type="similarity">
    <text evidence="1">Belongs to the KAE1 / TsaD family.</text>
</comment>
<proteinExistence type="inferred from homology"/>
<reference key="1">
    <citation type="journal article" date="2009" name="Appl. Environ. Microbiol.">
        <title>Complete genome sequence of the chemolithoautotrophic marine magnetotactic coccus strain MC-1.</title>
        <authorList>
            <person name="Schubbe S."/>
            <person name="Williams T.J."/>
            <person name="Xie G."/>
            <person name="Kiss H.E."/>
            <person name="Brettin T.S."/>
            <person name="Martinez D."/>
            <person name="Ross C.A."/>
            <person name="Schuler D."/>
            <person name="Cox B.L."/>
            <person name="Nealson K.H."/>
            <person name="Bazylinski D.A."/>
        </authorList>
    </citation>
    <scope>NUCLEOTIDE SEQUENCE [LARGE SCALE GENOMIC DNA]</scope>
    <source>
        <strain>ATCC BAA-1437 / JCM 17883 / MC-1</strain>
    </source>
</reference>
<protein>
    <recommendedName>
        <fullName evidence="1">tRNA N6-adenosine threonylcarbamoyltransferase</fullName>
        <ecNumber evidence="1">2.3.1.234</ecNumber>
    </recommendedName>
    <alternativeName>
        <fullName evidence="1">N6-L-threonylcarbamoyladenine synthase</fullName>
        <shortName evidence="1">t(6)A synthase</shortName>
    </alternativeName>
    <alternativeName>
        <fullName evidence="1">t(6)A37 threonylcarbamoyladenosine biosynthesis protein TsaD</fullName>
    </alternativeName>
    <alternativeName>
        <fullName evidence="1">tRNA threonylcarbamoyladenosine biosynthesis protein TsaD</fullName>
    </alternativeName>
</protein>
<keyword id="KW-0012">Acyltransferase</keyword>
<keyword id="KW-0963">Cytoplasm</keyword>
<keyword id="KW-0408">Iron</keyword>
<keyword id="KW-0479">Metal-binding</keyword>
<keyword id="KW-1185">Reference proteome</keyword>
<keyword id="KW-0808">Transferase</keyword>
<keyword id="KW-0819">tRNA processing</keyword>
<sequence>MLRVLGIESSCDETAAAVVEGAEHGHPHGVVVRSNVVWSQLEVHALYGGVVPELASRAHIRHIQPVIEQALAEAGVRPQQLDAIAVTVAPGLVGALLVGVAAAQGLAVALDKPLVPVHHMEGHLMSPFLMAGVVPAMEFPFVALLVSGGHTLLLHARDFGDYQLLGQTRDDAVGEAFDKGARMLGLGYPGGPEVAALAQSGDRQAVAFPRVLLDRSQFDFSFSGLKTALRTHLLKFPPESGGPSLADVAASYQEAIVDTLVIKSLSACRHVGVSRLVIAGGVGANRRLREKLAKQALKQGVQLYAPPIHLCTDNGAMIASAGVCRLARGDQARGVVNAVPRLPIHELEKIYGR</sequence>
<organism>
    <name type="scientific">Magnetococcus marinus (strain ATCC BAA-1437 / JCM 17883 / MC-1)</name>
    <dbReference type="NCBI Taxonomy" id="156889"/>
    <lineage>
        <taxon>Bacteria</taxon>
        <taxon>Pseudomonadati</taxon>
        <taxon>Pseudomonadota</taxon>
        <taxon>Alphaproteobacteria</taxon>
        <taxon>Magnetococcales</taxon>
        <taxon>Magnetococcaceae</taxon>
        <taxon>Magnetococcus</taxon>
    </lineage>
</organism>
<evidence type="ECO:0000255" key="1">
    <source>
        <dbReference type="HAMAP-Rule" id="MF_01445"/>
    </source>
</evidence>
<feature type="chain" id="PRO_0000303416" description="tRNA N6-adenosine threonylcarbamoyltransferase">
    <location>
        <begin position="1"/>
        <end position="353"/>
    </location>
</feature>
<feature type="binding site" evidence="1">
    <location>
        <position position="119"/>
    </location>
    <ligand>
        <name>Fe cation</name>
        <dbReference type="ChEBI" id="CHEBI:24875"/>
    </ligand>
</feature>
<feature type="binding site" evidence="1">
    <location>
        <position position="123"/>
    </location>
    <ligand>
        <name>Fe cation</name>
        <dbReference type="ChEBI" id="CHEBI:24875"/>
    </ligand>
</feature>
<feature type="binding site" evidence="1">
    <location>
        <begin position="145"/>
        <end position="149"/>
    </location>
    <ligand>
        <name>substrate</name>
    </ligand>
</feature>
<feature type="binding site" evidence="1">
    <location>
        <position position="178"/>
    </location>
    <ligand>
        <name>substrate</name>
    </ligand>
</feature>
<feature type="binding site" evidence="1">
    <location>
        <position position="191"/>
    </location>
    <ligand>
        <name>substrate</name>
    </ligand>
</feature>
<feature type="binding site" evidence="1">
    <location>
        <position position="285"/>
    </location>
    <ligand>
        <name>substrate</name>
    </ligand>
</feature>
<feature type="binding site" evidence="1">
    <location>
        <position position="313"/>
    </location>
    <ligand>
        <name>Fe cation</name>
        <dbReference type="ChEBI" id="CHEBI:24875"/>
    </ligand>
</feature>
<name>TSAD_MAGMM</name>
<dbReference type="EC" id="2.3.1.234" evidence="1"/>
<dbReference type="EMBL" id="CP000471">
    <property type="protein sequence ID" value="ABK43261.1"/>
    <property type="molecule type" value="Genomic_DNA"/>
</dbReference>
<dbReference type="RefSeq" id="WP_011712421.1">
    <property type="nucleotide sequence ID" value="NC_008576.1"/>
</dbReference>
<dbReference type="SMR" id="A0L5L8"/>
<dbReference type="STRING" id="156889.Mmc1_0740"/>
<dbReference type="KEGG" id="mgm:Mmc1_0740"/>
<dbReference type="eggNOG" id="COG0533">
    <property type="taxonomic scope" value="Bacteria"/>
</dbReference>
<dbReference type="HOGENOM" id="CLU_023208_0_2_5"/>
<dbReference type="OrthoDB" id="9806197at2"/>
<dbReference type="Proteomes" id="UP000002586">
    <property type="component" value="Chromosome"/>
</dbReference>
<dbReference type="GO" id="GO:0005737">
    <property type="term" value="C:cytoplasm"/>
    <property type="evidence" value="ECO:0007669"/>
    <property type="project" value="UniProtKB-SubCell"/>
</dbReference>
<dbReference type="GO" id="GO:0005506">
    <property type="term" value="F:iron ion binding"/>
    <property type="evidence" value="ECO:0007669"/>
    <property type="project" value="UniProtKB-UniRule"/>
</dbReference>
<dbReference type="GO" id="GO:0061711">
    <property type="term" value="F:N(6)-L-threonylcarbamoyladenine synthase activity"/>
    <property type="evidence" value="ECO:0007669"/>
    <property type="project" value="UniProtKB-EC"/>
</dbReference>
<dbReference type="GO" id="GO:0002949">
    <property type="term" value="P:tRNA threonylcarbamoyladenosine modification"/>
    <property type="evidence" value="ECO:0007669"/>
    <property type="project" value="UniProtKB-UniRule"/>
</dbReference>
<dbReference type="CDD" id="cd24133">
    <property type="entry name" value="ASKHA_NBD_TsaD_bac"/>
    <property type="match status" value="1"/>
</dbReference>
<dbReference type="FunFam" id="3.30.420.40:FF:000012">
    <property type="entry name" value="tRNA N6-adenosine threonylcarbamoyltransferase"/>
    <property type="match status" value="1"/>
</dbReference>
<dbReference type="FunFam" id="3.30.420.40:FF:000040">
    <property type="entry name" value="tRNA N6-adenosine threonylcarbamoyltransferase"/>
    <property type="match status" value="1"/>
</dbReference>
<dbReference type="Gene3D" id="3.30.420.40">
    <property type="match status" value="2"/>
</dbReference>
<dbReference type="HAMAP" id="MF_01445">
    <property type="entry name" value="TsaD"/>
    <property type="match status" value="1"/>
</dbReference>
<dbReference type="InterPro" id="IPR043129">
    <property type="entry name" value="ATPase_NBD"/>
</dbReference>
<dbReference type="InterPro" id="IPR000905">
    <property type="entry name" value="Gcp-like_dom"/>
</dbReference>
<dbReference type="InterPro" id="IPR017861">
    <property type="entry name" value="KAE1/TsaD"/>
</dbReference>
<dbReference type="InterPro" id="IPR022450">
    <property type="entry name" value="TsaD"/>
</dbReference>
<dbReference type="NCBIfam" id="TIGR00329">
    <property type="entry name" value="gcp_kae1"/>
    <property type="match status" value="1"/>
</dbReference>
<dbReference type="NCBIfam" id="TIGR03723">
    <property type="entry name" value="T6A_TsaD_YgjD"/>
    <property type="match status" value="1"/>
</dbReference>
<dbReference type="PANTHER" id="PTHR11735">
    <property type="entry name" value="TRNA N6-ADENOSINE THREONYLCARBAMOYLTRANSFERASE"/>
    <property type="match status" value="1"/>
</dbReference>
<dbReference type="PANTHER" id="PTHR11735:SF6">
    <property type="entry name" value="TRNA N6-ADENOSINE THREONYLCARBAMOYLTRANSFERASE, MITOCHONDRIAL"/>
    <property type="match status" value="1"/>
</dbReference>
<dbReference type="Pfam" id="PF00814">
    <property type="entry name" value="TsaD"/>
    <property type="match status" value="1"/>
</dbReference>
<dbReference type="PRINTS" id="PR00789">
    <property type="entry name" value="OSIALOPTASE"/>
</dbReference>
<dbReference type="SUPFAM" id="SSF53067">
    <property type="entry name" value="Actin-like ATPase domain"/>
    <property type="match status" value="2"/>
</dbReference>
<gene>
    <name evidence="1" type="primary">tsaD</name>
    <name type="synonym">gcp</name>
    <name type="ordered locus">Mmc1_0740</name>
</gene>